<dbReference type="EMBL" id="CP001083">
    <property type="protein sequence ID" value="ACQ53952.1"/>
    <property type="molecule type" value="Genomic_DNA"/>
</dbReference>
<dbReference type="RefSeq" id="WP_003357537.1">
    <property type="nucleotide sequence ID" value="NC_012658.1"/>
</dbReference>
<dbReference type="SMR" id="C3KUS0"/>
<dbReference type="KEGG" id="cbi:CLJ_B3587"/>
<dbReference type="HOGENOM" id="CLU_061534_1_0_9"/>
<dbReference type="Proteomes" id="UP000002333">
    <property type="component" value="Chromosome"/>
</dbReference>
<dbReference type="GO" id="GO:0005737">
    <property type="term" value="C:cytoplasm"/>
    <property type="evidence" value="ECO:0007669"/>
    <property type="project" value="UniProtKB-SubCell"/>
</dbReference>
<dbReference type="GO" id="GO:0003677">
    <property type="term" value="F:DNA binding"/>
    <property type="evidence" value="ECO:0007669"/>
    <property type="project" value="UniProtKB-UniRule"/>
</dbReference>
<dbReference type="GO" id="GO:0003700">
    <property type="term" value="F:DNA-binding transcription factor activity"/>
    <property type="evidence" value="ECO:0007669"/>
    <property type="project" value="UniProtKB-UniRule"/>
</dbReference>
<dbReference type="GO" id="GO:0045892">
    <property type="term" value="P:negative regulation of DNA-templated transcription"/>
    <property type="evidence" value="ECO:0007669"/>
    <property type="project" value="InterPro"/>
</dbReference>
<dbReference type="GO" id="GO:0051775">
    <property type="term" value="P:response to redox state"/>
    <property type="evidence" value="ECO:0007669"/>
    <property type="project" value="InterPro"/>
</dbReference>
<dbReference type="Gene3D" id="3.40.50.720">
    <property type="entry name" value="NAD(P)-binding Rossmann-like Domain"/>
    <property type="match status" value="1"/>
</dbReference>
<dbReference type="Gene3D" id="1.10.10.10">
    <property type="entry name" value="Winged helix-like DNA-binding domain superfamily/Winged helix DNA-binding domain"/>
    <property type="match status" value="1"/>
</dbReference>
<dbReference type="HAMAP" id="MF_01131">
    <property type="entry name" value="Rex"/>
    <property type="match status" value="1"/>
</dbReference>
<dbReference type="InterPro" id="IPR003781">
    <property type="entry name" value="CoA-bd"/>
</dbReference>
<dbReference type="InterPro" id="IPR036291">
    <property type="entry name" value="NAD(P)-bd_dom_sf"/>
</dbReference>
<dbReference type="InterPro" id="IPR009718">
    <property type="entry name" value="Rex_DNA-bd_C_dom"/>
</dbReference>
<dbReference type="InterPro" id="IPR022876">
    <property type="entry name" value="Tscrpt_rep_Rex"/>
</dbReference>
<dbReference type="InterPro" id="IPR036388">
    <property type="entry name" value="WH-like_DNA-bd_sf"/>
</dbReference>
<dbReference type="InterPro" id="IPR036390">
    <property type="entry name" value="WH_DNA-bd_sf"/>
</dbReference>
<dbReference type="NCBIfam" id="NF003989">
    <property type="entry name" value="PRK05472.1-3"/>
    <property type="match status" value="1"/>
</dbReference>
<dbReference type="NCBIfam" id="NF003990">
    <property type="entry name" value="PRK05472.1-4"/>
    <property type="match status" value="1"/>
</dbReference>
<dbReference type="NCBIfam" id="NF003993">
    <property type="entry name" value="PRK05472.2-2"/>
    <property type="match status" value="1"/>
</dbReference>
<dbReference type="NCBIfam" id="NF003994">
    <property type="entry name" value="PRK05472.2-3"/>
    <property type="match status" value="1"/>
</dbReference>
<dbReference type="NCBIfam" id="NF003995">
    <property type="entry name" value="PRK05472.2-4"/>
    <property type="match status" value="1"/>
</dbReference>
<dbReference type="NCBIfam" id="NF003996">
    <property type="entry name" value="PRK05472.2-5"/>
    <property type="match status" value="1"/>
</dbReference>
<dbReference type="PANTHER" id="PTHR35786">
    <property type="entry name" value="REDOX-SENSING TRANSCRIPTIONAL REPRESSOR REX"/>
    <property type="match status" value="1"/>
</dbReference>
<dbReference type="PANTHER" id="PTHR35786:SF1">
    <property type="entry name" value="REDOX-SENSING TRANSCRIPTIONAL REPRESSOR REX 1"/>
    <property type="match status" value="1"/>
</dbReference>
<dbReference type="Pfam" id="PF02629">
    <property type="entry name" value="CoA_binding"/>
    <property type="match status" value="1"/>
</dbReference>
<dbReference type="Pfam" id="PF06971">
    <property type="entry name" value="Put_DNA-bind_N"/>
    <property type="match status" value="1"/>
</dbReference>
<dbReference type="SMART" id="SM00881">
    <property type="entry name" value="CoA_binding"/>
    <property type="match status" value="1"/>
</dbReference>
<dbReference type="SUPFAM" id="SSF51735">
    <property type="entry name" value="NAD(P)-binding Rossmann-fold domains"/>
    <property type="match status" value="1"/>
</dbReference>
<dbReference type="SUPFAM" id="SSF46785">
    <property type="entry name" value="Winged helix' DNA-binding domain"/>
    <property type="match status" value="1"/>
</dbReference>
<accession>C3KUS0</accession>
<evidence type="ECO:0000255" key="1">
    <source>
        <dbReference type="HAMAP-Rule" id="MF_01131"/>
    </source>
</evidence>
<protein>
    <recommendedName>
        <fullName evidence="1">Redox-sensing transcriptional repressor Rex</fullName>
    </recommendedName>
</protein>
<organism>
    <name type="scientific">Clostridium botulinum (strain 657 / Type Ba4)</name>
    <dbReference type="NCBI Taxonomy" id="515621"/>
    <lineage>
        <taxon>Bacteria</taxon>
        <taxon>Bacillati</taxon>
        <taxon>Bacillota</taxon>
        <taxon>Clostridia</taxon>
        <taxon>Eubacteriales</taxon>
        <taxon>Clostridiaceae</taxon>
        <taxon>Clostridium</taxon>
    </lineage>
</organism>
<gene>
    <name evidence="1" type="primary">rex</name>
    <name type="ordered locus">CLJ_B3587</name>
</gene>
<name>REX_CLOB6</name>
<proteinExistence type="inferred from homology"/>
<keyword id="KW-0963">Cytoplasm</keyword>
<keyword id="KW-0238">DNA-binding</keyword>
<keyword id="KW-0520">NAD</keyword>
<keyword id="KW-0678">Repressor</keyword>
<keyword id="KW-0804">Transcription</keyword>
<keyword id="KW-0805">Transcription regulation</keyword>
<comment type="function">
    <text evidence="1">Modulates transcription in response to changes in cellular NADH/NAD(+) redox state.</text>
</comment>
<comment type="subunit">
    <text evidence="1">Homodimer.</text>
</comment>
<comment type="subcellular location">
    <subcellularLocation>
        <location evidence="1">Cytoplasm</location>
    </subcellularLocation>
</comment>
<comment type="similarity">
    <text evidence="1">Belongs to the transcriptional regulatory Rex family.</text>
</comment>
<sequence length="210" mass="23754">MDKKKNISMAVIRRLPKYHRYLYELLKNDVDRISSKELSEKIGFTASQIRQDLNCFGDFGQQGYGYNVSELHHQISNILGLNNPYNIIIIGAGNIGQALANYTRFSKLGFNVKAMFDTNPKLIGLKIREIEILDIDYLSSYLEKNNIDIGIICVPHDNAQKVANILVKNDIKGIWNFAPIDLSVPEDVVVENVHLSDSLLTLTCLINKTE</sequence>
<reference key="1">
    <citation type="submission" date="2008-05" db="EMBL/GenBank/DDBJ databases">
        <title>Genome sequence of Clostridium botulinum Ba4 strain 657.</title>
        <authorList>
            <person name="Shrivastava S."/>
            <person name="Brown J.L."/>
            <person name="Bruce D."/>
            <person name="Detter C."/>
            <person name="Munk C."/>
            <person name="Smith L.A."/>
            <person name="Smith T.J."/>
            <person name="Sutton G."/>
            <person name="Brettin T.S."/>
        </authorList>
    </citation>
    <scope>NUCLEOTIDE SEQUENCE [LARGE SCALE GENOMIC DNA]</scope>
    <source>
        <strain>657 / Type Ba4</strain>
    </source>
</reference>
<feature type="chain" id="PRO_1000213631" description="Redox-sensing transcriptional repressor Rex">
    <location>
        <begin position="1"/>
        <end position="210"/>
    </location>
</feature>
<feature type="DNA-binding region" description="H-T-H motif" evidence="1">
    <location>
        <begin position="17"/>
        <end position="56"/>
    </location>
</feature>
<feature type="binding site" evidence="1">
    <location>
        <begin position="91"/>
        <end position="96"/>
    </location>
    <ligand>
        <name>NAD(+)</name>
        <dbReference type="ChEBI" id="CHEBI:57540"/>
    </ligand>
</feature>